<accession>A4WSC5</accession>
<gene>
    <name evidence="1" type="primary">coaD</name>
    <name type="ordered locus">Rsph17025_1392</name>
</gene>
<organism>
    <name type="scientific">Cereibacter sphaeroides (strain ATCC 17025 / ATH 2.4.3)</name>
    <name type="common">Rhodobacter sphaeroides</name>
    <dbReference type="NCBI Taxonomy" id="349102"/>
    <lineage>
        <taxon>Bacteria</taxon>
        <taxon>Pseudomonadati</taxon>
        <taxon>Pseudomonadota</taxon>
        <taxon>Alphaproteobacteria</taxon>
        <taxon>Rhodobacterales</taxon>
        <taxon>Paracoccaceae</taxon>
        <taxon>Cereibacter</taxon>
    </lineage>
</organism>
<dbReference type="EC" id="2.7.7.3" evidence="1"/>
<dbReference type="EMBL" id="CP000661">
    <property type="protein sequence ID" value="ABP70289.1"/>
    <property type="molecule type" value="Genomic_DNA"/>
</dbReference>
<dbReference type="SMR" id="A4WSC5"/>
<dbReference type="STRING" id="349102.Rsph17025_1392"/>
<dbReference type="KEGG" id="rsq:Rsph17025_1392"/>
<dbReference type="eggNOG" id="COG0669">
    <property type="taxonomic scope" value="Bacteria"/>
</dbReference>
<dbReference type="HOGENOM" id="CLU_100149_0_1_5"/>
<dbReference type="BioCyc" id="RSPH349102:G1G8M-1433-MONOMER"/>
<dbReference type="UniPathway" id="UPA00241">
    <property type="reaction ID" value="UER00355"/>
</dbReference>
<dbReference type="GO" id="GO:0005737">
    <property type="term" value="C:cytoplasm"/>
    <property type="evidence" value="ECO:0007669"/>
    <property type="project" value="UniProtKB-SubCell"/>
</dbReference>
<dbReference type="GO" id="GO:0005524">
    <property type="term" value="F:ATP binding"/>
    <property type="evidence" value="ECO:0007669"/>
    <property type="project" value="UniProtKB-KW"/>
</dbReference>
<dbReference type="GO" id="GO:0004595">
    <property type="term" value="F:pantetheine-phosphate adenylyltransferase activity"/>
    <property type="evidence" value="ECO:0007669"/>
    <property type="project" value="UniProtKB-UniRule"/>
</dbReference>
<dbReference type="GO" id="GO:0015937">
    <property type="term" value="P:coenzyme A biosynthetic process"/>
    <property type="evidence" value="ECO:0007669"/>
    <property type="project" value="UniProtKB-UniRule"/>
</dbReference>
<dbReference type="CDD" id="cd02163">
    <property type="entry name" value="PPAT"/>
    <property type="match status" value="1"/>
</dbReference>
<dbReference type="Gene3D" id="3.40.50.620">
    <property type="entry name" value="HUPs"/>
    <property type="match status" value="1"/>
</dbReference>
<dbReference type="HAMAP" id="MF_00151">
    <property type="entry name" value="PPAT_bact"/>
    <property type="match status" value="1"/>
</dbReference>
<dbReference type="InterPro" id="IPR004821">
    <property type="entry name" value="Cyt_trans-like"/>
</dbReference>
<dbReference type="InterPro" id="IPR001980">
    <property type="entry name" value="PPAT"/>
</dbReference>
<dbReference type="InterPro" id="IPR014729">
    <property type="entry name" value="Rossmann-like_a/b/a_fold"/>
</dbReference>
<dbReference type="NCBIfam" id="TIGR01510">
    <property type="entry name" value="coaD_prev_kdtB"/>
    <property type="match status" value="1"/>
</dbReference>
<dbReference type="NCBIfam" id="TIGR00125">
    <property type="entry name" value="cyt_tran_rel"/>
    <property type="match status" value="1"/>
</dbReference>
<dbReference type="PANTHER" id="PTHR21342">
    <property type="entry name" value="PHOSPHOPANTETHEINE ADENYLYLTRANSFERASE"/>
    <property type="match status" value="1"/>
</dbReference>
<dbReference type="PANTHER" id="PTHR21342:SF1">
    <property type="entry name" value="PHOSPHOPANTETHEINE ADENYLYLTRANSFERASE"/>
    <property type="match status" value="1"/>
</dbReference>
<dbReference type="Pfam" id="PF01467">
    <property type="entry name" value="CTP_transf_like"/>
    <property type="match status" value="1"/>
</dbReference>
<dbReference type="PRINTS" id="PR01020">
    <property type="entry name" value="LPSBIOSNTHSS"/>
</dbReference>
<dbReference type="SUPFAM" id="SSF52374">
    <property type="entry name" value="Nucleotidylyl transferase"/>
    <property type="match status" value="1"/>
</dbReference>
<comment type="function">
    <text evidence="1">Reversibly transfers an adenylyl group from ATP to 4'-phosphopantetheine, yielding dephospho-CoA (dPCoA) and pyrophosphate.</text>
</comment>
<comment type="catalytic activity">
    <reaction evidence="1">
        <text>(R)-4'-phosphopantetheine + ATP + H(+) = 3'-dephospho-CoA + diphosphate</text>
        <dbReference type="Rhea" id="RHEA:19801"/>
        <dbReference type="ChEBI" id="CHEBI:15378"/>
        <dbReference type="ChEBI" id="CHEBI:30616"/>
        <dbReference type="ChEBI" id="CHEBI:33019"/>
        <dbReference type="ChEBI" id="CHEBI:57328"/>
        <dbReference type="ChEBI" id="CHEBI:61723"/>
        <dbReference type="EC" id="2.7.7.3"/>
    </reaction>
</comment>
<comment type="cofactor">
    <cofactor evidence="1">
        <name>Mg(2+)</name>
        <dbReference type="ChEBI" id="CHEBI:18420"/>
    </cofactor>
</comment>
<comment type="pathway">
    <text evidence="1">Cofactor biosynthesis; coenzyme A biosynthesis; CoA from (R)-pantothenate: step 4/5.</text>
</comment>
<comment type="subunit">
    <text evidence="1">Homohexamer.</text>
</comment>
<comment type="subcellular location">
    <subcellularLocation>
        <location evidence="1">Cytoplasm</location>
    </subcellularLocation>
</comment>
<comment type="similarity">
    <text evidence="1">Belongs to the bacterial CoaD family.</text>
</comment>
<feature type="chain" id="PRO_1000076780" description="Phosphopantetheine adenylyltransferase">
    <location>
        <begin position="1"/>
        <end position="162"/>
    </location>
</feature>
<feature type="binding site" evidence="1">
    <location>
        <begin position="9"/>
        <end position="10"/>
    </location>
    <ligand>
        <name>ATP</name>
        <dbReference type="ChEBI" id="CHEBI:30616"/>
    </ligand>
</feature>
<feature type="binding site" evidence="1">
    <location>
        <position position="9"/>
    </location>
    <ligand>
        <name>substrate</name>
    </ligand>
</feature>
<feature type="binding site" evidence="1">
    <location>
        <position position="17"/>
    </location>
    <ligand>
        <name>ATP</name>
        <dbReference type="ChEBI" id="CHEBI:30616"/>
    </ligand>
</feature>
<feature type="binding site" evidence="1">
    <location>
        <position position="41"/>
    </location>
    <ligand>
        <name>substrate</name>
    </ligand>
</feature>
<feature type="binding site" evidence="1">
    <location>
        <position position="77"/>
    </location>
    <ligand>
        <name>substrate</name>
    </ligand>
</feature>
<feature type="binding site" evidence="1">
    <location>
        <position position="91"/>
    </location>
    <ligand>
        <name>substrate</name>
    </ligand>
</feature>
<feature type="binding site" evidence="1">
    <location>
        <begin position="92"/>
        <end position="94"/>
    </location>
    <ligand>
        <name>ATP</name>
        <dbReference type="ChEBI" id="CHEBI:30616"/>
    </ligand>
</feature>
<feature type="binding site" evidence="1">
    <location>
        <position position="102"/>
    </location>
    <ligand>
        <name>ATP</name>
        <dbReference type="ChEBI" id="CHEBI:30616"/>
    </ligand>
</feature>
<feature type="binding site" evidence="1">
    <location>
        <begin position="127"/>
        <end position="133"/>
    </location>
    <ligand>
        <name>ATP</name>
        <dbReference type="ChEBI" id="CHEBI:30616"/>
    </ligand>
</feature>
<feature type="site" description="Transition state stabilizer" evidence="1">
    <location>
        <position position="17"/>
    </location>
</feature>
<evidence type="ECO:0000255" key="1">
    <source>
        <dbReference type="HAMAP-Rule" id="MF_00151"/>
    </source>
</evidence>
<reference key="1">
    <citation type="submission" date="2007-04" db="EMBL/GenBank/DDBJ databases">
        <title>Complete sequence of chromosome of Rhodobacter sphaeroides ATCC 17025.</title>
        <authorList>
            <consortium name="US DOE Joint Genome Institute"/>
            <person name="Copeland A."/>
            <person name="Lucas S."/>
            <person name="Lapidus A."/>
            <person name="Barry K."/>
            <person name="Detter J.C."/>
            <person name="Glavina del Rio T."/>
            <person name="Hammon N."/>
            <person name="Israni S."/>
            <person name="Dalin E."/>
            <person name="Tice H."/>
            <person name="Pitluck S."/>
            <person name="Chertkov O."/>
            <person name="Brettin T."/>
            <person name="Bruce D."/>
            <person name="Han C."/>
            <person name="Schmutz J."/>
            <person name="Larimer F."/>
            <person name="Land M."/>
            <person name="Hauser L."/>
            <person name="Kyrpides N."/>
            <person name="Kim E."/>
            <person name="Richardson P."/>
            <person name="Mackenzie C."/>
            <person name="Choudhary M."/>
            <person name="Donohue T.J."/>
            <person name="Kaplan S."/>
        </authorList>
    </citation>
    <scope>NUCLEOTIDE SEQUENCE [LARGE SCALE GENOMIC DNA]</scope>
    <source>
        <strain>ATCC 17025 / ATH 2.4.3</strain>
    </source>
</reference>
<sequence length="162" mass="17691">MRIGLYPGTFDPLTLGHLDIIQRAMALVDRLVIGVAINRDKGPLFSLEERVRMVESECRAIAANGGEIVVHPFENLLIDCARDVGASVILRGLRAVADFEYEFQMVGMNRALDAGIETVFLMADARRQAIASKLVKEIARLGGDVSSFVTPDVGAALMAKYR</sequence>
<protein>
    <recommendedName>
        <fullName evidence="1">Phosphopantetheine adenylyltransferase</fullName>
        <ecNumber evidence="1">2.7.7.3</ecNumber>
    </recommendedName>
    <alternativeName>
        <fullName evidence="1">Dephospho-CoA pyrophosphorylase</fullName>
    </alternativeName>
    <alternativeName>
        <fullName evidence="1">Pantetheine-phosphate adenylyltransferase</fullName>
        <shortName evidence="1">PPAT</shortName>
    </alternativeName>
</protein>
<proteinExistence type="inferred from homology"/>
<name>COAD_CERS5</name>
<keyword id="KW-0067">ATP-binding</keyword>
<keyword id="KW-0173">Coenzyme A biosynthesis</keyword>
<keyword id="KW-0963">Cytoplasm</keyword>
<keyword id="KW-0460">Magnesium</keyword>
<keyword id="KW-0547">Nucleotide-binding</keyword>
<keyword id="KW-0548">Nucleotidyltransferase</keyword>
<keyword id="KW-0808">Transferase</keyword>